<evidence type="ECO:0000250" key="1">
    <source>
        <dbReference type="UniProtKB" id="A0A0D4WTV1"/>
    </source>
</evidence>
<evidence type="ECO:0000250" key="2">
    <source>
        <dbReference type="UniProtKB" id="A0A0D4WV12"/>
    </source>
</evidence>
<evidence type="ECO:0000250" key="3">
    <source>
        <dbReference type="UniProtKB" id="P0CE80"/>
    </source>
</evidence>
<evidence type="ECO:0000250" key="4">
    <source>
        <dbReference type="UniProtKB" id="Q4ZFU2"/>
    </source>
</evidence>
<evidence type="ECO:0000250" key="5">
    <source>
        <dbReference type="UniProtKB" id="Q8I914"/>
    </source>
</evidence>
<evidence type="ECO:0000303" key="6">
    <source>
    </source>
</evidence>
<evidence type="ECO:0000305" key="7"/>
<evidence type="ECO:0000305" key="8">
    <source>
    </source>
</evidence>
<comment type="function">
    <text evidence="1 3">Dermonecrotic toxins cleave the phosphodiester linkage between the phosphate and headgroup of certain phospholipids (sphingolipid and lysolipid substrates), forming an alcohol (often choline) and a cyclic phosphate (By similarity). This toxin acts on sphingomyelin (SM) (By similarity). It may also act on ceramide phosphoethanolamine (CPE), lysophosphatidylcholine (LPC) and lysophosphatidylethanolamine (LPE), but not on lysophosphatidylserine (LPS), and lysophosphatidylglycerol (LPG) (By similarity). It acts by transphosphatidylation, releasing exclusively cyclic phosphate products as second products (By similarity). Induces dermonecrosis, hemolysis, increased vascular permeability, edema, inflammatory response, and platelet aggregation (By similarity).</text>
</comment>
<comment type="catalytic activity">
    <reaction evidence="1">
        <text>an N-(acyl)-sphingosylphosphocholine = an N-(acyl)-sphingosyl-1,3-cyclic phosphate + choline</text>
        <dbReference type="Rhea" id="RHEA:60652"/>
        <dbReference type="ChEBI" id="CHEBI:15354"/>
        <dbReference type="ChEBI" id="CHEBI:64583"/>
        <dbReference type="ChEBI" id="CHEBI:143892"/>
    </reaction>
</comment>
<comment type="catalytic activity">
    <reaction evidence="1">
        <text>an N-(acyl)-sphingosylphosphoethanolamine = an N-(acyl)-sphingosyl-1,3-cyclic phosphate + ethanolamine</text>
        <dbReference type="Rhea" id="RHEA:60648"/>
        <dbReference type="ChEBI" id="CHEBI:57603"/>
        <dbReference type="ChEBI" id="CHEBI:143891"/>
        <dbReference type="ChEBI" id="CHEBI:143892"/>
    </reaction>
</comment>
<comment type="catalytic activity">
    <reaction evidence="1">
        <text>a 1-acyl-sn-glycero-3-phosphocholine = a 1-acyl-sn-glycero-2,3-cyclic phosphate + choline</text>
        <dbReference type="Rhea" id="RHEA:60700"/>
        <dbReference type="ChEBI" id="CHEBI:15354"/>
        <dbReference type="ChEBI" id="CHEBI:58168"/>
        <dbReference type="ChEBI" id="CHEBI:143947"/>
    </reaction>
</comment>
<comment type="catalytic activity">
    <reaction evidence="1">
        <text>a 1-acyl-sn-glycero-3-phosphoethanolamine = a 1-acyl-sn-glycero-2,3-cyclic phosphate + ethanolamine</text>
        <dbReference type="Rhea" id="RHEA:60704"/>
        <dbReference type="ChEBI" id="CHEBI:57603"/>
        <dbReference type="ChEBI" id="CHEBI:64381"/>
        <dbReference type="ChEBI" id="CHEBI:143947"/>
    </reaction>
</comment>
<comment type="cofactor">
    <cofactor evidence="5">
        <name>Mg(2+)</name>
        <dbReference type="ChEBI" id="CHEBI:18420"/>
    </cofactor>
    <text evidence="5">Binds 1 Mg(2+) ion per subunit.</text>
</comment>
<comment type="subcellular location">
    <subcellularLocation>
        <location evidence="8">Secreted</location>
    </subcellularLocation>
</comment>
<comment type="tissue specificity">
    <text evidence="8">Expressed by the venom gland.</text>
</comment>
<comment type="similarity">
    <text evidence="7">Belongs to the arthropod phospholipase D family. Class I subfamily.</text>
</comment>
<comment type="caution">
    <text evidence="1 2 4">The most common activity assay for dermonecrotic toxins detects enzymatic activity by monitoring choline release from substrate. Liberation of choline from sphingomyelin (SM) or lysophosphatidylcholine (LPC) is commonly assumed to result from substrate hydrolysis, giving either ceramide-1-phosphate (C1P) or lysophosphatidic acid (LPA), respectively, as a second product. However, two studies from Lajoie and colleagues (2013 and 2015) report the observation of exclusive formation of cyclic phosphate products as second products, resulting from intramolecular transphosphatidylation. Cyclic phosphates have vastly different biological properties from their monoester counterparts, and they may be relevant to the pathology of brown spider envenomation.</text>
</comment>
<keyword id="KW-0204">Cytolysis</keyword>
<keyword id="KW-1061">Dermonecrotic toxin</keyword>
<keyword id="KW-1015">Disulfide bond</keyword>
<keyword id="KW-0354">Hemolysis</keyword>
<keyword id="KW-0442">Lipid degradation</keyword>
<keyword id="KW-0443">Lipid metabolism</keyword>
<keyword id="KW-0456">Lyase</keyword>
<keyword id="KW-0460">Magnesium</keyword>
<keyword id="KW-0479">Metal-binding</keyword>
<keyword id="KW-0964">Secreted</keyword>
<keyword id="KW-0800">Toxin</keyword>
<name>A312_LOXS4</name>
<accession>C0JB11</accession>
<protein>
    <recommendedName>
        <fullName evidence="6">Dermonecrotic toxin Ls4SicTox-alphaIII1ii</fullName>
        <ecNumber evidence="4">4.6.1.-</ecNumber>
    </recommendedName>
    <alternativeName>
        <fullName>Phospholipase D</fullName>
        <shortName>PLD</shortName>
    </alternativeName>
    <alternativeName>
        <fullName>Sphingomyelin phosphodiesterase D</fullName>
        <shortName>SMD</shortName>
        <shortName>SMase D</shortName>
        <shortName>Sphingomyelinase D</shortName>
    </alternativeName>
</protein>
<dbReference type="EC" id="4.6.1.-" evidence="4"/>
<dbReference type="EMBL" id="FJ171446">
    <property type="protein sequence ID" value="ACN48942.1"/>
    <property type="molecule type" value="mRNA"/>
</dbReference>
<dbReference type="SMR" id="C0JB11"/>
<dbReference type="GO" id="GO:0005576">
    <property type="term" value="C:extracellular region"/>
    <property type="evidence" value="ECO:0007669"/>
    <property type="project" value="UniProtKB-SubCell"/>
</dbReference>
<dbReference type="GO" id="GO:0016829">
    <property type="term" value="F:lyase activity"/>
    <property type="evidence" value="ECO:0007669"/>
    <property type="project" value="UniProtKB-KW"/>
</dbReference>
<dbReference type="GO" id="GO:0046872">
    <property type="term" value="F:metal ion binding"/>
    <property type="evidence" value="ECO:0007669"/>
    <property type="project" value="UniProtKB-KW"/>
</dbReference>
<dbReference type="GO" id="GO:0008081">
    <property type="term" value="F:phosphoric diester hydrolase activity"/>
    <property type="evidence" value="ECO:0007669"/>
    <property type="project" value="InterPro"/>
</dbReference>
<dbReference type="GO" id="GO:0090729">
    <property type="term" value="F:toxin activity"/>
    <property type="evidence" value="ECO:0007669"/>
    <property type="project" value="UniProtKB-KW"/>
</dbReference>
<dbReference type="GO" id="GO:0031640">
    <property type="term" value="P:killing of cells of another organism"/>
    <property type="evidence" value="ECO:0007669"/>
    <property type="project" value="UniProtKB-KW"/>
</dbReference>
<dbReference type="GO" id="GO:0016042">
    <property type="term" value="P:lipid catabolic process"/>
    <property type="evidence" value="ECO:0007669"/>
    <property type="project" value="UniProtKB-KW"/>
</dbReference>
<dbReference type="CDD" id="cd08576">
    <property type="entry name" value="GDPD_like_SMaseD_PLD"/>
    <property type="match status" value="1"/>
</dbReference>
<dbReference type="Gene3D" id="3.20.20.190">
    <property type="entry name" value="Phosphatidylinositol (PI) phosphodiesterase"/>
    <property type="match status" value="1"/>
</dbReference>
<dbReference type="InterPro" id="IPR017946">
    <property type="entry name" value="PLC-like_Pdiesterase_TIM-brl"/>
</dbReference>
<dbReference type="SUPFAM" id="SSF51695">
    <property type="entry name" value="PLC-like phosphodiesterases"/>
    <property type="match status" value="1"/>
</dbReference>
<proteinExistence type="evidence at transcript level"/>
<organism>
    <name type="scientific">Loxosceles sp. (strain 4 GJB-2008)</name>
    <name type="common">Recluse spider</name>
    <dbReference type="NCBI Taxonomy" id="575961"/>
    <lineage>
        <taxon>Eukaryota</taxon>
        <taxon>Metazoa</taxon>
        <taxon>Ecdysozoa</taxon>
        <taxon>Arthropoda</taxon>
        <taxon>Chelicerata</taxon>
        <taxon>Arachnida</taxon>
        <taxon>Araneae</taxon>
        <taxon>Araneomorphae</taxon>
        <taxon>Haplogynae</taxon>
        <taxon>Scytodoidea</taxon>
        <taxon>Sicariidae</taxon>
        <taxon>Loxosceles</taxon>
    </lineage>
</organism>
<feature type="chain" id="PRO_0000392825" description="Dermonecrotic toxin Ls4SicTox-alphaIII1ii">
    <location>
        <begin position="1" status="less than"/>
        <end position="278"/>
    </location>
</feature>
<feature type="active site" evidence="5">
    <location>
        <position position="5"/>
    </location>
</feature>
<feature type="active site" description="Nucleophile" evidence="5">
    <location>
        <position position="40"/>
    </location>
</feature>
<feature type="binding site" evidence="5">
    <location>
        <position position="25"/>
    </location>
    <ligand>
        <name>Mg(2+)</name>
        <dbReference type="ChEBI" id="CHEBI:18420"/>
    </ligand>
</feature>
<feature type="binding site" evidence="5">
    <location>
        <position position="27"/>
    </location>
    <ligand>
        <name>Mg(2+)</name>
        <dbReference type="ChEBI" id="CHEBI:18420"/>
    </ligand>
</feature>
<feature type="binding site" evidence="5">
    <location>
        <position position="84"/>
    </location>
    <ligand>
        <name>Mg(2+)</name>
        <dbReference type="ChEBI" id="CHEBI:18420"/>
    </ligand>
</feature>
<feature type="disulfide bond" evidence="5">
    <location>
        <begin position="44"/>
        <end position="50"/>
    </location>
</feature>
<feature type="non-terminal residue">
    <location>
        <position position="1"/>
    </location>
</feature>
<sequence length="278" mass="31607">WIMGHMVNAVKQIPTSLDLGANALEMDVTFKNEEPTYTYHGVPCDAFRDCIRWEYFNVFAKTLREYTTPGFDKYREQLILLVFDLKTGDMNNAQARTAGVNTAKQLLQYYWNNDNNGGRAYVVLSIPDIAQHELIKGFKETLKKEGHENLLDKVGYDFSGPYLPRLPTLDETHEAFKKAGVEGHVWLSDGLTNFSPLGDMARLKEAIKSRDSANGFINKIYYWSVDKVSTVEKALKVGVDGIMTNHPDVIIGVLNENGFKDKYRLATYDDNPWETFGK</sequence>
<reference key="1">
    <citation type="journal article" date="2009" name="Mol. Biol. Evol.">
        <title>Molecular evolution, functional variation, and proposed nomenclature of the gene family that includes sphingomyelinase D in sicariid spider venoms.</title>
        <authorList>
            <person name="Binford G.J."/>
            <person name="Bodner M.R."/>
            <person name="Cordes M.H."/>
            <person name="Baldwin K.L."/>
            <person name="Rynerson M.R."/>
            <person name="Burns S.N."/>
            <person name="Zobel-Thropp P.A."/>
        </authorList>
    </citation>
    <scope>NUCLEOTIDE SEQUENCE [MRNA]</scope>
    <scope>NOMENCLATURE</scope>
    <source>
        <tissue>Venom gland</tissue>
    </source>
</reference>